<feature type="chain" id="PRO_0000197146" description="Transcriptional regulatory protein TOD6">
    <location>
        <begin position="1"/>
        <end position="525"/>
    </location>
</feature>
<feature type="domain" description="HTH myb-type" evidence="1">
    <location>
        <begin position="67"/>
        <end position="124"/>
    </location>
</feature>
<feature type="DNA-binding region" description="H-T-H motif" evidence="1">
    <location>
        <begin position="97"/>
        <end position="120"/>
    </location>
</feature>
<feature type="region of interest" description="Disordered" evidence="2">
    <location>
        <begin position="22"/>
        <end position="82"/>
    </location>
</feature>
<feature type="region of interest" description="Disordered" evidence="2">
    <location>
        <begin position="283"/>
        <end position="308"/>
    </location>
</feature>
<feature type="region of interest" description="Disordered" evidence="2">
    <location>
        <begin position="451"/>
        <end position="510"/>
    </location>
</feature>
<feature type="compositionally biased region" description="Polar residues" evidence="2">
    <location>
        <begin position="35"/>
        <end position="47"/>
    </location>
</feature>
<feature type="compositionally biased region" description="Basic and acidic residues" evidence="2">
    <location>
        <begin position="61"/>
        <end position="71"/>
    </location>
</feature>
<feature type="compositionally biased region" description="Low complexity" evidence="2">
    <location>
        <begin position="299"/>
        <end position="308"/>
    </location>
</feature>
<feature type="compositionally biased region" description="Polar residues" evidence="2">
    <location>
        <begin position="472"/>
        <end position="483"/>
    </location>
</feature>
<feature type="compositionally biased region" description="Polar residues" evidence="2">
    <location>
        <begin position="495"/>
        <end position="506"/>
    </location>
</feature>
<feature type="modified residue" description="Phosphoserine" evidence="10">
    <location>
        <position position="280"/>
    </location>
</feature>
<feature type="modified residue" description="Phosphoserine" evidence="10">
    <location>
        <position position="333"/>
    </location>
</feature>
<feature type="modified residue" description="Phosphoserine" evidence="10">
    <location>
        <position position="341"/>
    </location>
</feature>
<feature type="modified residue" description="Phosphoserine" evidence="9">
    <location>
        <position position="366"/>
    </location>
</feature>
<evidence type="ECO:0000255" key="1">
    <source>
        <dbReference type="PROSITE-ProRule" id="PRU00625"/>
    </source>
</evidence>
<evidence type="ECO:0000256" key="2">
    <source>
        <dbReference type="SAM" id="MobiDB-lite"/>
    </source>
</evidence>
<evidence type="ECO:0000269" key="3">
    <source>
    </source>
</evidence>
<evidence type="ECO:0000269" key="4">
    <source>
    </source>
</evidence>
<evidence type="ECO:0000269" key="5">
    <source>
    </source>
</evidence>
<evidence type="ECO:0000269" key="6">
    <source>
    </source>
</evidence>
<evidence type="ECO:0000269" key="7">
    <source>
    </source>
</evidence>
<evidence type="ECO:0000305" key="8"/>
<evidence type="ECO:0007744" key="9">
    <source>
    </source>
</evidence>
<evidence type="ECO:0007744" key="10">
    <source>
    </source>
</evidence>
<sequence>MTLPKLSSVSVSSGHVSANSHGFSILSKHPHPNNLVHSHSLSHTNAKSHLPISSTSTKENSTNKEEAESLKKNNPSSWDPSDDIKLRHLKEIKNLGWKEIAHHFPNRTPNACQFRWRRLKSGNLKSNKTAVIDINKLFGVYATGDATPSAGTPSAEEAVKEEAVEDEDITAGSSAIEDSPPDFKPLVKPKYMDRKLITQRSTSTFSDHEPQHTKPRKLFVKPRSFSHSITTNTPNVKTAQQTNLSLYNTTSAKTNKAVNSNDYENIGLVPKIIIRSRRNSFIPSTQIPHSTTKTRKNSHSVISSRRSSFNMMHSRRSSFNSHAPTEPISRRASLVVSPYMSPRRLSTSQSVHYHPQHQYYLNPIASPNCKTDHANDKITHTRTFLDMQKFANKHPWSREDDEVLLNNTKDKQNHLSPLEISIVLPNNRSELEIQQRMDYLKRKGRVSGFHTNEGCKDEEEEDDIDPLHKENGINTPSQQSQNYGMLEAKHDNPKSSELSSMTSANDIRNEQDELPGINSIFKNIF</sequence>
<gene>
    <name type="primary">TOD6</name>
    <name type="synonym">PBF1</name>
    <name type="ordered locus">YBL054W</name>
    <name type="ORF">YBL0509</name>
    <name type="ORF">YBL0513</name>
</gene>
<reference key="1">
    <citation type="journal article" date="1993" name="Yeast">
        <title>Sequencing and functional analysis of a 32,560 bp segment on the left arm of yeast chromosome II. Identification of 26 open reading frames, including the KIP1 and SEC17 genes.</title>
        <authorList>
            <person name="Scherens B."/>
            <person name="el Bakkoury M."/>
            <person name="Vierendeels F."/>
            <person name="Dubois E."/>
            <person name="Messenguy F."/>
        </authorList>
    </citation>
    <scope>NUCLEOTIDE SEQUENCE [GENOMIC DNA]</scope>
    <source>
        <strain>ATCC 204508 / S288c</strain>
    </source>
</reference>
<reference key="2">
    <citation type="journal article" date="1994" name="EMBO J.">
        <title>Complete DNA sequence of yeast chromosome II.</title>
        <authorList>
            <person name="Feldmann H."/>
            <person name="Aigle M."/>
            <person name="Aljinovic G."/>
            <person name="Andre B."/>
            <person name="Baclet M.C."/>
            <person name="Barthe C."/>
            <person name="Baur A."/>
            <person name="Becam A.-M."/>
            <person name="Biteau N."/>
            <person name="Boles E."/>
            <person name="Brandt T."/>
            <person name="Brendel M."/>
            <person name="Brueckner M."/>
            <person name="Bussereau F."/>
            <person name="Christiansen C."/>
            <person name="Contreras R."/>
            <person name="Crouzet M."/>
            <person name="Cziepluch C."/>
            <person name="Demolis N."/>
            <person name="Delaveau T."/>
            <person name="Doignon F."/>
            <person name="Domdey H."/>
            <person name="Duesterhus S."/>
            <person name="Dubois E."/>
            <person name="Dujon B."/>
            <person name="El Bakkoury M."/>
            <person name="Entian K.-D."/>
            <person name="Feuermann M."/>
            <person name="Fiers W."/>
            <person name="Fobo G.M."/>
            <person name="Fritz C."/>
            <person name="Gassenhuber J."/>
            <person name="Glansdorff N."/>
            <person name="Goffeau A."/>
            <person name="Grivell L.A."/>
            <person name="de Haan M."/>
            <person name="Hein C."/>
            <person name="Herbert C.J."/>
            <person name="Hollenberg C.P."/>
            <person name="Holmstroem K."/>
            <person name="Jacq C."/>
            <person name="Jacquet M."/>
            <person name="Jauniaux J.-C."/>
            <person name="Jonniaux J.-L."/>
            <person name="Kallesoee T."/>
            <person name="Kiesau P."/>
            <person name="Kirchrath L."/>
            <person name="Koetter P."/>
            <person name="Korol S."/>
            <person name="Liebl S."/>
            <person name="Logghe M."/>
            <person name="Lohan A.J.E."/>
            <person name="Louis E.J."/>
            <person name="Li Z.Y."/>
            <person name="Maat M.J."/>
            <person name="Mallet L."/>
            <person name="Mannhaupt G."/>
            <person name="Messenguy F."/>
            <person name="Miosga T."/>
            <person name="Molemans F."/>
            <person name="Mueller S."/>
            <person name="Nasr F."/>
            <person name="Obermaier B."/>
            <person name="Perea J."/>
            <person name="Pierard A."/>
            <person name="Piravandi E."/>
            <person name="Pohl F.M."/>
            <person name="Pohl T.M."/>
            <person name="Potier S."/>
            <person name="Proft M."/>
            <person name="Purnelle B."/>
            <person name="Ramezani Rad M."/>
            <person name="Rieger M."/>
            <person name="Rose M."/>
            <person name="Schaaff-Gerstenschlaeger I."/>
            <person name="Scherens B."/>
            <person name="Schwarzlose C."/>
            <person name="Skala J."/>
            <person name="Slonimski P.P."/>
            <person name="Smits P.H.M."/>
            <person name="Souciet J.-L."/>
            <person name="Steensma H.Y."/>
            <person name="Stucka R."/>
            <person name="Urrestarazu L.A."/>
            <person name="van der Aart Q.J.M."/>
            <person name="Van Dyck L."/>
            <person name="Vassarotti A."/>
            <person name="Vetter I."/>
            <person name="Vierendeels F."/>
            <person name="Vissers S."/>
            <person name="Wagner G."/>
            <person name="de Wergifosse P."/>
            <person name="Wolfe K.H."/>
            <person name="Zagulski M."/>
            <person name="Zimmermann F.K."/>
            <person name="Mewes H.-W."/>
            <person name="Kleine K."/>
        </authorList>
    </citation>
    <scope>NUCLEOTIDE SEQUENCE [LARGE SCALE GENOMIC DNA]</scope>
    <source>
        <strain>ATCC 204508 / S288c</strain>
    </source>
</reference>
<reference key="3">
    <citation type="journal article" date="2014" name="G3 (Bethesda)">
        <title>The reference genome sequence of Saccharomyces cerevisiae: Then and now.</title>
        <authorList>
            <person name="Engel S.R."/>
            <person name="Dietrich F.S."/>
            <person name="Fisk D.G."/>
            <person name="Binkley G."/>
            <person name="Balakrishnan R."/>
            <person name="Costanzo M.C."/>
            <person name="Dwight S.S."/>
            <person name="Hitz B.C."/>
            <person name="Karra K."/>
            <person name="Nash R.S."/>
            <person name="Weng S."/>
            <person name="Wong E.D."/>
            <person name="Lloyd P."/>
            <person name="Skrzypek M.S."/>
            <person name="Miyasato S.R."/>
            <person name="Simison M."/>
            <person name="Cherry J.M."/>
        </authorList>
    </citation>
    <scope>GENOME REANNOTATION</scope>
    <source>
        <strain>ATCC 204508 / S288c</strain>
    </source>
</reference>
<reference key="4">
    <citation type="journal article" date="2007" name="Genome Res.">
        <title>Approaching a complete repository of sequence-verified protein-encoding clones for Saccharomyces cerevisiae.</title>
        <authorList>
            <person name="Hu Y."/>
            <person name="Rolfs A."/>
            <person name="Bhullar B."/>
            <person name="Murthy T.V.S."/>
            <person name="Zhu C."/>
            <person name="Berger M.F."/>
            <person name="Camargo A.A."/>
            <person name="Kelley F."/>
            <person name="McCarron S."/>
            <person name="Jepson D."/>
            <person name="Richardson A."/>
            <person name="Raphael J."/>
            <person name="Moreira D."/>
            <person name="Taycher E."/>
            <person name="Zuo D."/>
            <person name="Mohr S."/>
            <person name="Kane M.F."/>
            <person name="Williamson J."/>
            <person name="Simpson A.J.G."/>
            <person name="Bulyk M.L."/>
            <person name="Harlow E."/>
            <person name="Marsischky G."/>
            <person name="Kolodner R.D."/>
            <person name="LaBaer J."/>
        </authorList>
    </citation>
    <scope>NUCLEOTIDE SEQUENCE [GENOMIC DNA]</scope>
    <source>
        <strain>ATCC 204508 / S288c</strain>
    </source>
</reference>
<reference key="5">
    <citation type="journal article" date="2003" name="Nature">
        <title>Global analysis of protein localization in budding yeast.</title>
        <authorList>
            <person name="Huh W.-K."/>
            <person name="Falvo J.V."/>
            <person name="Gerke L.C."/>
            <person name="Carroll A.S."/>
            <person name="Howson R.W."/>
            <person name="Weissman J.S."/>
            <person name="O'Shea E.K."/>
        </authorList>
    </citation>
    <scope>SUBCELLULAR LOCATION [LARGE SCALE ANALYSIS]</scope>
</reference>
<reference key="6">
    <citation type="journal article" date="2003" name="Nature">
        <title>Global analysis of protein expression in yeast.</title>
        <authorList>
            <person name="Ghaemmaghami S."/>
            <person name="Huh W.-K."/>
            <person name="Bower K."/>
            <person name="Howson R.W."/>
            <person name="Belle A."/>
            <person name="Dephoure N."/>
            <person name="O'Shea E.K."/>
            <person name="Weissman J.S."/>
        </authorList>
    </citation>
    <scope>LEVEL OF PROTEIN EXPRESSION [LARGE SCALE ANALYSIS]</scope>
</reference>
<reference key="7">
    <citation type="journal article" date="2006" name="Yeast">
        <title>The budding yeast rRNA and ribosome biosynthesis (RRB) regulon contains over 200 genes.</title>
        <authorList>
            <person name="Wade C.H."/>
            <person name="Umbarger M.A."/>
            <person name="McAlear M.A."/>
        </authorList>
    </citation>
    <scope>FUNCTION</scope>
</reference>
<reference key="8">
    <citation type="journal article" date="2007" name="J. Proteome Res.">
        <title>Large-scale phosphorylation analysis of alpha-factor-arrested Saccharomyces cerevisiae.</title>
        <authorList>
            <person name="Li X."/>
            <person name="Gerber S.A."/>
            <person name="Rudner A.D."/>
            <person name="Beausoleil S.A."/>
            <person name="Haas W."/>
            <person name="Villen J."/>
            <person name="Elias J.E."/>
            <person name="Gygi S.P."/>
        </authorList>
    </citation>
    <scope>PHOSPHORYLATION [LARGE SCALE ANALYSIS] AT SER-366</scope>
    <scope>IDENTIFICATION BY MASS SPECTROMETRY [LARGE SCALE ANALYSIS]</scope>
    <source>
        <strain>ADR376</strain>
    </source>
</reference>
<reference key="9">
    <citation type="journal article" date="2008" name="Genome Biol.">
        <title>Chromatin Central: towards the comparative proteome by accurate mapping of the yeast proteomic environment.</title>
        <authorList>
            <person name="Shevchenko A."/>
            <person name="Roguev A."/>
            <person name="Schaft D."/>
            <person name="Buchanan L."/>
            <person name="Habermann B."/>
            <person name="Sakalar C."/>
            <person name="Thomas H."/>
            <person name="Krogan N.J."/>
            <person name="Shevchenko A."/>
            <person name="Stewart A.F."/>
        </authorList>
    </citation>
    <scope>IDENTIFICATION IN THE RPD3(L) COMPLEX</scope>
    <scope>IDENTIFICATION BY MASS SPECTROMETRY</scope>
</reference>
<reference key="10">
    <citation type="journal article" date="2008" name="Mol. Cell">
        <title>A library of yeast transcription factor motifs reveals a widespread function for Rsc3 in targeting nucleosome exclusion at promoters.</title>
        <authorList>
            <person name="Badis G."/>
            <person name="Chan E.T."/>
            <person name="van Bakel H."/>
            <person name="Pena-Castillo L."/>
            <person name="Tillo D."/>
            <person name="Tsui K."/>
            <person name="Carlson C.D."/>
            <person name="Gossett A.J."/>
            <person name="Hasinoff M.J."/>
            <person name="Warren C.L."/>
            <person name="Gebbia M."/>
            <person name="Talukder S."/>
            <person name="Yang A."/>
            <person name="Mnaimneh S."/>
            <person name="Terterov D."/>
            <person name="Coburn D."/>
            <person name="Li Yeo A."/>
            <person name="Yeo Z.X."/>
            <person name="Clarke N.D."/>
            <person name="Lieb J.D."/>
            <person name="Ansari A.Z."/>
            <person name="Nislow C."/>
            <person name="Hughes T.R."/>
        </authorList>
    </citation>
    <scope>DNA-BINDING</scope>
</reference>
<reference key="11">
    <citation type="journal article" date="2009" name="Genome Res.">
        <title>High-resolution DNA-binding specificity analysis of yeast transcription factors.</title>
        <authorList>
            <person name="Zhu C."/>
            <person name="Byers K.J."/>
            <person name="McCord R.P."/>
            <person name="Shi Z."/>
            <person name="Berger M.F."/>
            <person name="Newburger D.E."/>
            <person name="Saulrieta K."/>
            <person name="Smith Z."/>
            <person name="Shah M.V."/>
            <person name="Radhakrishnan M."/>
            <person name="Philippakis A.A."/>
            <person name="Hu Y."/>
            <person name="De Masi F."/>
            <person name="Pacek M."/>
            <person name="Rolfs A."/>
            <person name="Murthy T.V.S."/>
            <person name="Labaer J."/>
            <person name="Bulyk M.L."/>
        </authorList>
    </citation>
    <scope>FUNCTION</scope>
</reference>
<reference key="12">
    <citation type="journal article" date="2009" name="Science">
        <title>Global analysis of Cdk1 substrate phosphorylation sites provides insights into evolution.</title>
        <authorList>
            <person name="Holt L.J."/>
            <person name="Tuch B.B."/>
            <person name="Villen J."/>
            <person name="Johnson A.D."/>
            <person name="Gygi S.P."/>
            <person name="Morgan D.O."/>
        </authorList>
    </citation>
    <scope>PHOSPHORYLATION [LARGE SCALE ANALYSIS] AT SER-280; SER-333 AND SER-341</scope>
    <scope>IDENTIFICATION BY MASS SPECTROMETRY [LARGE SCALE ANALYSIS]</scope>
</reference>
<proteinExistence type="evidence at protein level"/>
<protein>
    <recommendedName>
        <fullName>Transcriptional regulatory protein TOD6</fullName>
    </recommendedName>
    <alternativeName>
        <fullName>PAC-binding factor 1</fullName>
    </alternativeName>
    <alternativeName>
        <fullName>Twin of DOT6</fullName>
    </alternativeName>
</protein>
<keyword id="KW-0963">Cytoplasm</keyword>
<keyword id="KW-0238">DNA-binding</keyword>
<keyword id="KW-0539">Nucleus</keyword>
<keyword id="KW-0597">Phosphoprotein</keyword>
<keyword id="KW-1185">Reference proteome</keyword>
<organism>
    <name type="scientific">Saccharomyces cerevisiae (strain ATCC 204508 / S288c)</name>
    <name type="common">Baker's yeast</name>
    <dbReference type="NCBI Taxonomy" id="559292"/>
    <lineage>
        <taxon>Eukaryota</taxon>
        <taxon>Fungi</taxon>
        <taxon>Dikarya</taxon>
        <taxon>Ascomycota</taxon>
        <taxon>Saccharomycotina</taxon>
        <taxon>Saccharomycetes</taxon>
        <taxon>Saccharomycetales</taxon>
        <taxon>Saccharomycetaceae</taxon>
        <taxon>Saccharomyces</taxon>
    </lineage>
</organism>
<comment type="function">
    <text evidence="5 7">Component of the RPD3 histone deacetylase complex RPD3C(L) responsible for the deacetylation of lysine residues on the N-terminal part of the core histones (H2A, H2B, H3 and H4). Histone deacetylation gives a tag for epigenetic repression and plays an important role in transcriptional regulation, cell cycle progression and developmental events. TOD6 binds to sequences containing the core CGATG, which resembles the PAC (Polymerase A and C) motif.</text>
</comment>
<comment type="subunit">
    <text evidence="6">Component of the RPD3C(L) complex composed of at least ASH1, CTI6, DEP1, DOT6, PHO23, RPD3, RXT2, RXT3, SAP30, SDS3, SIN3, TOD6; UME1 and UME6.</text>
</comment>
<comment type="subcellular location">
    <subcellularLocation>
        <location evidence="3">Cytoplasm</location>
    </subcellularLocation>
    <subcellularLocation>
        <location evidence="1 3">Nucleus</location>
    </subcellularLocation>
</comment>
<comment type="miscellaneous">
    <text evidence="4">Present with 830 molecules/cell in log phase SD medium.</text>
</comment>
<comment type="similarity">
    <text evidence="8">Belongs to the DOT6 family.</text>
</comment>
<dbReference type="EMBL" id="Z23261">
    <property type="protein sequence ID" value="CAA80793.1"/>
    <property type="molecule type" value="Genomic_DNA"/>
</dbReference>
<dbReference type="EMBL" id="Z35815">
    <property type="protein sequence ID" value="CAA84874.1"/>
    <property type="molecule type" value="Genomic_DNA"/>
</dbReference>
<dbReference type="EMBL" id="AY692625">
    <property type="protein sequence ID" value="AAT92644.1"/>
    <property type="molecule type" value="Genomic_DNA"/>
</dbReference>
<dbReference type="EMBL" id="BK006936">
    <property type="protein sequence ID" value="DAA07066.1"/>
    <property type="molecule type" value="Genomic_DNA"/>
</dbReference>
<dbReference type="PIR" id="S39834">
    <property type="entry name" value="S39834"/>
</dbReference>
<dbReference type="RefSeq" id="NP_009499.1">
    <property type="nucleotide sequence ID" value="NM_001178294.1"/>
</dbReference>
<dbReference type="SMR" id="P34219"/>
<dbReference type="BioGRID" id="32645">
    <property type="interactions" value="90"/>
</dbReference>
<dbReference type="DIP" id="DIP-2636N"/>
<dbReference type="FunCoup" id="P34219">
    <property type="interactions" value="266"/>
</dbReference>
<dbReference type="IntAct" id="P34219">
    <property type="interactions" value="7"/>
</dbReference>
<dbReference type="MINT" id="P34219"/>
<dbReference type="STRING" id="4932.YBL054W"/>
<dbReference type="GlyGen" id="P34219">
    <property type="glycosylation" value="2 sites"/>
</dbReference>
<dbReference type="iPTMnet" id="P34219"/>
<dbReference type="PaxDb" id="4932-YBL054W"/>
<dbReference type="PeptideAtlas" id="P34219"/>
<dbReference type="TopDownProteomics" id="P34219"/>
<dbReference type="EnsemblFungi" id="YBL054W_mRNA">
    <property type="protein sequence ID" value="YBL054W"/>
    <property type="gene ID" value="YBL054W"/>
</dbReference>
<dbReference type="GeneID" id="852226"/>
<dbReference type="KEGG" id="sce:YBL054W"/>
<dbReference type="AGR" id="SGD:S000000150"/>
<dbReference type="SGD" id="S000000150">
    <property type="gene designation" value="TOD6"/>
</dbReference>
<dbReference type="VEuPathDB" id="FungiDB:YBL054W"/>
<dbReference type="eggNOG" id="ENOG502RXV1">
    <property type="taxonomic scope" value="Eukaryota"/>
</dbReference>
<dbReference type="GeneTree" id="ENSGT00940000176456"/>
<dbReference type="HOGENOM" id="CLU_018984_1_0_1"/>
<dbReference type="InParanoid" id="P34219"/>
<dbReference type="OMA" id="GWKEIAH"/>
<dbReference type="OrthoDB" id="2143914at2759"/>
<dbReference type="BioCyc" id="YEAST:G3O-28952-MONOMER"/>
<dbReference type="BioGRID-ORCS" id="852226">
    <property type="hits" value="0 hits in 13 CRISPR screens"/>
</dbReference>
<dbReference type="PRO" id="PR:P34219"/>
<dbReference type="Proteomes" id="UP000002311">
    <property type="component" value="Chromosome II"/>
</dbReference>
<dbReference type="RNAct" id="P34219">
    <property type="molecule type" value="protein"/>
</dbReference>
<dbReference type="GO" id="GO:0005737">
    <property type="term" value="C:cytoplasm"/>
    <property type="evidence" value="ECO:0007005"/>
    <property type="project" value="SGD"/>
</dbReference>
<dbReference type="GO" id="GO:0005634">
    <property type="term" value="C:nucleus"/>
    <property type="evidence" value="ECO:0007005"/>
    <property type="project" value="SGD"/>
</dbReference>
<dbReference type="GO" id="GO:0070210">
    <property type="term" value="C:Rpd3L-Expanded complex"/>
    <property type="evidence" value="ECO:0007005"/>
    <property type="project" value="SGD"/>
</dbReference>
<dbReference type="GO" id="GO:0000981">
    <property type="term" value="F:DNA-binding transcription factor activity, RNA polymerase II-specific"/>
    <property type="evidence" value="ECO:0000318"/>
    <property type="project" value="GO_Central"/>
</dbReference>
<dbReference type="GO" id="GO:0000978">
    <property type="term" value="F:RNA polymerase II cis-regulatory region sequence-specific DNA binding"/>
    <property type="evidence" value="ECO:0000318"/>
    <property type="project" value="GO_Central"/>
</dbReference>
<dbReference type="GO" id="GO:0043565">
    <property type="term" value="F:sequence-specific DNA binding"/>
    <property type="evidence" value="ECO:0000314"/>
    <property type="project" value="SGD"/>
</dbReference>
<dbReference type="GO" id="GO:0006355">
    <property type="term" value="P:regulation of DNA-templated transcription"/>
    <property type="evidence" value="ECO:0000318"/>
    <property type="project" value="GO_Central"/>
</dbReference>
<dbReference type="GO" id="GO:0006357">
    <property type="term" value="P:regulation of transcription by RNA polymerase II"/>
    <property type="evidence" value="ECO:0000315"/>
    <property type="project" value="SGD"/>
</dbReference>
<dbReference type="CDD" id="cd00167">
    <property type="entry name" value="SANT"/>
    <property type="match status" value="1"/>
</dbReference>
<dbReference type="Gene3D" id="1.10.10.60">
    <property type="entry name" value="Homeodomain-like"/>
    <property type="match status" value="1"/>
</dbReference>
<dbReference type="InterPro" id="IPR009057">
    <property type="entry name" value="Homeodomain-like_sf"/>
</dbReference>
<dbReference type="InterPro" id="IPR017930">
    <property type="entry name" value="Myb_dom"/>
</dbReference>
<dbReference type="InterPro" id="IPR050560">
    <property type="entry name" value="MYB_TF"/>
</dbReference>
<dbReference type="InterPro" id="IPR001005">
    <property type="entry name" value="SANT/Myb"/>
</dbReference>
<dbReference type="PANTHER" id="PTHR45614">
    <property type="entry name" value="MYB PROTEIN-RELATED"/>
    <property type="match status" value="1"/>
</dbReference>
<dbReference type="PANTHER" id="PTHR45614:SF254">
    <property type="entry name" value="TRANSCRIPTIONAL REGULATORY PROTEIN TOD6"/>
    <property type="match status" value="1"/>
</dbReference>
<dbReference type="Pfam" id="PF13921">
    <property type="entry name" value="Myb_DNA-bind_6"/>
    <property type="match status" value="1"/>
</dbReference>
<dbReference type="SMART" id="SM00717">
    <property type="entry name" value="SANT"/>
    <property type="match status" value="2"/>
</dbReference>
<dbReference type="SUPFAM" id="SSF46689">
    <property type="entry name" value="Homeodomain-like"/>
    <property type="match status" value="1"/>
</dbReference>
<dbReference type="PROSITE" id="PS51294">
    <property type="entry name" value="HTH_MYB"/>
    <property type="match status" value="1"/>
</dbReference>
<accession>P34219</accession>
<accession>D6VPU6</accession>
<name>TOD6_YEAST</name>